<evidence type="ECO:0000255" key="1">
    <source>
        <dbReference type="HAMAP-Rule" id="MF_00358"/>
    </source>
</evidence>
<evidence type="ECO:0000256" key="2">
    <source>
        <dbReference type="SAM" id="MobiDB-lite"/>
    </source>
</evidence>
<evidence type="ECO:0000305" key="3"/>
<feature type="chain" id="PRO_1000205367" description="Small ribosomal subunit protein bS21">
    <location>
        <begin position="1"/>
        <end position="58"/>
    </location>
</feature>
<feature type="region of interest" description="Disordered" evidence="2">
    <location>
        <begin position="32"/>
        <end position="58"/>
    </location>
</feature>
<feature type="compositionally biased region" description="Basic and acidic residues" evidence="2">
    <location>
        <begin position="32"/>
        <end position="42"/>
    </location>
</feature>
<feature type="compositionally biased region" description="Basic residues" evidence="2">
    <location>
        <begin position="43"/>
        <end position="58"/>
    </location>
</feature>
<dbReference type="EMBL" id="CP001104">
    <property type="protein sequence ID" value="ACR71968.1"/>
    <property type="molecule type" value="Genomic_DNA"/>
</dbReference>
<dbReference type="RefSeq" id="WP_005539624.1">
    <property type="nucleotide sequence ID" value="NC_012778.1"/>
</dbReference>
<dbReference type="SMR" id="C4Z055"/>
<dbReference type="STRING" id="515620.EUBELI_00967"/>
<dbReference type="GeneID" id="86940125"/>
<dbReference type="KEGG" id="eel:EUBELI_00967"/>
<dbReference type="eggNOG" id="COG0828">
    <property type="taxonomic scope" value="Bacteria"/>
</dbReference>
<dbReference type="HOGENOM" id="CLU_159258_3_2_9"/>
<dbReference type="Proteomes" id="UP000001476">
    <property type="component" value="Chromosome"/>
</dbReference>
<dbReference type="GO" id="GO:1990904">
    <property type="term" value="C:ribonucleoprotein complex"/>
    <property type="evidence" value="ECO:0007669"/>
    <property type="project" value="UniProtKB-KW"/>
</dbReference>
<dbReference type="GO" id="GO:0005840">
    <property type="term" value="C:ribosome"/>
    <property type="evidence" value="ECO:0007669"/>
    <property type="project" value="UniProtKB-KW"/>
</dbReference>
<dbReference type="GO" id="GO:0003735">
    <property type="term" value="F:structural constituent of ribosome"/>
    <property type="evidence" value="ECO:0007669"/>
    <property type="project" value="InterPro"/>
</dbReference>
<dbReference type="GO" id="GO:0006412">
    <property type="term" value="P:translation"/>
    <property type="evidence" value="ECO:0007669"/>
    <property type="project" value="UniProtKB-UniRule"/>
</dbReference>
<dbReference type="Gene3D" id="1.20.5.1150">
    <property type="entry name" value="Ribosomal protein S8"/>
    <property type="match status" value="1"/>
</dbReference>
<dbReference type="HAMAP" id="MF_00358">
    <property type="entry name" value="Ribosomal_bS21"/>
    <property type="match status" value="1"/>
</dbReference>
<dbReference type="InterPro" id="IPR001911">
    <property type="entry name" value="Ribosomal_bS21"/>
</dbReference>
<dbReference type="InterPro" id="IPR018278">
    <property type="entry name" value="Ribosomal_bS21_CS"/>
</dbReference>
<dbReference type="InterPro" id="IPR038380">
    <property type="entry name" value="Ribosomal_bS21_sf"/>
</dbReference>
<dbReference type="NCBIfam" id="TIGR00030">
    <property type="entry name" value="S21p"/>
    <property type="match status" value="1"/>
</dbReference>
<dbReference type="PANTHER" id="PTHR21109">
    <property type="entry name" value="MITOCHONDRIAL 28S RIBOSOMAL PROTEIN S21"/>
    <property type="match status" value="1"/>
</dbReference>
<dbReference type="PANTHER" id="PTHR21109:SF22">
    <property type="entry name" value="SMALL RIBOSOMAL SUBUNIT PROTEIN BS21"/>
    <property type="match status" value="1"/>
</dbReference>
<dbReference type="Pfam" id="PF01165">
    <property type="entry name" value="Ribosomal_S21"/>
    <property type="match status" value="1"/>
</dbReference>
<dbReference type="PRINTS" id="PR00976">
    <property type="entry name" value="RIBOSOMALS21"/>
</dbReference>
<dbReference type="PROSITE" id="PS01181">
    <property type="entry name" value="RIBOSOMAL_S21"/>
    <property type="match status" value="1"/>
</dbReference>
<name>RS21_LACE2</name>
<protein>
    <recommendedName>
        <fullName evidence="1">Small ribosomal subunit protein bS21</fullName>
    </recommendedName>
    <alternativeName>
        <fullName evidence="3">30S ribosomal protein S21</fullName>
    </alternativeName>
</protein>
<accession>C4Z055</accession>
<organism>
    <name type="scientific">Lachnospira eligens (strain ATCC 27750 / DSM 3376 / VPI C15-48 / C15-B4)</name>
    <name type="common">Eubacterium eligens</name>
    <dbReference type="NCBI Taxonomy" id="515620"/>
    <lineage>
        <taxon>Bacteria</taxon>
        <taxon>Bacillati</taxon>
        <taxon>Bacillota</taxon>
        <taxon>Clostridia</taxon>
        <taxon>Lachnospirales</taxon>
        <taxon>Lachnospiraceae</taxon>
        <taxon>Lachnospira</taxon>
    </lineage>
</organism>
<gene>
    <name evidence="1" type="primary">rpsU</name>
    <name type="ordered locus">EUBELI_00967</name>
</gene>
<comment type="similarity">
    <text evidence="1">Belongs to the bacterial ribosomal protein bS21 family.</text>
</comment>
<sequence>MSNVIVKENESLDSALRRFKRNCAKAGIQQEIRKREHYEKPSVRRKKKSEAARKRKFN</sequence>
<proteinExistence type="inferred from homology"/>
<keyword id="KW-1185">Reference proteome</keyword>
<keyword id="KW-0687">Ribonucleoprotein</keyword>
<keyword id="KW-0689">Ribosomal protein</keyword>
<reference key="1">
    <citation type="journal article" date="2009" name="Proc. Natl. Acad. Sci. U.S.A.">
        <title>Characterizing a model human gut microbiota composed of members of its two dominant bacterial phyla.</title>
        <authorList>
            <person name="Mahowald M.A."/>
            <person name="Rey F.E."/>
            <person name="Seedorf H."/>
            <person name="Turnbaugh P.J."/>
            <person name="Fulton R.S."/>
            <person name="Wollam A."/>
            <person name="Shah N."/>
            <person name="Wang C."/>
            <person name="Magrini V."/>
            <person name="Wilson R.K."/>
            <person name="Cantarel B.L."/>
            <person name="Coutinho P.M."/>
            <person name="Henrissat B."/>
            <person name="Crock L.W."/>
            <person name="Russell A."/>
            <person name="Verberkmoes N.C."/>
            <person name="Hettich R.L."/>
            <person name="Gordon J.I."/>
        </authorList>
    </citation>
    <scope>NUCLEOTIDE SEQUENCE [LARGE SCALE GENOMIC DNA]</scope>
    <source>
        <strain>ATCC 27750 / DSM 3376 / VPI C15-48 / C15-B4</strain>
    </source>
</reference>